<sequence length="458" mass="50119">MLDATPKEIVERKALRINPAKTCQPVGAMYAALGIHNCLPHSHGSQGCCSYHRTVLSRHFKEPAMASTSSFTEGASVFGGGSNIKTAVKNIFSLYNPDIIAVHTTCLSETLGDDLPTYISQMEDAGSIPEGKLVIHTNTPSYVGSHVTGFANMVQGIVNYLSENTGAKNGKINVIPGFVGPADMREIKRLFEAMDIPYIMFPDTSGVLDGPTTGEYKMYPEGGTKIEDLKDTGNSDLTLSLGSYASDLGAKTLEKKCKVPFKTLRTPIGVSATDEFIMALSEATGKEVPASIEEERGQLIDLMIDAQQYLQGKKVALLGDPDEIIALSKFIIELGAIPKYVVTGTPGMKFQKEIDAMLAEAGIEGSKVKVEGDFFDVHQWIKNEGVDLLISNTYGKFIAREENIPFVRFGFPIMDRYGHYYNPKVGYKGAIRLVEEITNVILDKIERECTEEDFEVVR</sequence>
<gene>
    <name type="primary">nifK</name>
</gene>
<organism>
    <name type="scientific">Clostridium pasteurianum</name>
    <dbReference type="NCBI Taxonomy" id="1501"/>
    <lineage>
        <taxon>Bacteria</taxon>
        <taxon>Bacillati</taxon>
        <taxon>Bacillota</taxon>
        <taxon>Clostridia</taxon>
        <taxon>Eubacteriales</taxon>
        <taxon>Clostridiaceae</taxon>
        <taxon>Clostridium</taxon>
    </lineage>
</organism>
<proteinExistence type="evidence at protein level"/>
<comment type="function">
    <text>This molybdenum-iron protein is part of the nitrogenase complex that catalyzes the key enzymatic reactions in nitrogen fixation.</text>
</comment>
<comment type="catalytic activity">
    <reaction>
        <text>N2 + 8 reduced [2Fe-2S]-[ferredoxin] + 16 ATP + 16 H2O = H2 + 8 oxidized [2Fe-2S]-[ferredoxin] + 2 NH4(+) + 16 ADP + 16 phosphate + 6 H(+)</text>
        <dbReference type="Rhea" id="RHEA:21448"/>
        <dbReference type="Rhea" id="RHEA-COMP:10000"/>
        <dbReference type="Rhea" id="RHEA-COMP:10001"/>
        <dbReference type="ChEBI" id="CHEBI:15377"/>
        <dbReference type="ChEBI" id="CHEBI:15378"/>
        <dbReference type="ChEBI" id="CHEBI:17997"/>
        <dbReference type="ChEBI" id="CHEBI:18276"/>
        <dbReference type="ChEBI" id="CHEBI:28938"/>
        <dbReference type="ChEBI" id="CHEBI:30616"/>
        <dbReference type="ChEBI" id="CHEBI:33737"/>
        <dbReference type="ChEBI" id="CHEBI:33738"/>
        <dbReference type="ChEBI" id="CHEBI:43474"/>
        <dbReference type="ChEBI" id="CHEBI:456216"/>
        <dbReference type="EC" id="1.18.6.1"/>
    </reaction>
</comment>
<comment type="cofactor">
    <cofactor>
        <name>[8Fe-7S] cluster</name>
        <dbReference type="ChEBI" id="CHEBI:21143"/>
    </cofactor>
    <text>Binds 1 [8Fe-7S] cluster per heterodimer.</text>
</comment>
<comment type="subunit">
    <text>Tetramer of two alpha and two beta chains. Forms complex with the iron protein (nitrogenase component 2).</text>
</comment>
<comment type="similarity">
    <text evidence="1">Belongs to the NifD/NifK/NifE/NifN family.</text>
</comment>
<name>NIFK_CLOPA</name>
<protein>
    <recommendedName>
        <fullName>Nitrogenase molybdenum-iron protein beta chain</fullName>
        <ecNumber>1.18.6.1</ecNumber>
    </recommendedName>
    <alternativeName>
        <fullName>Dinitrogenase</fullName>
    </alternativeName>
    <alternativeName>
        <fullName>Nitrogenase component I</fullName>
    </alternativeName>
</protein>
<dbReference type="EC" id="1.18.6.1"/>
<dbReference type="EMBL" id="AY603957">
    <property type="protein sequence ID" value="AAA23266.2"/>
    <property type="molecule type" value="Genomic_DNA"/>
</dbReference>
<dbReference type="PIR" id="A29992">
    <property type="entry name" value="NICLMB"/>
</dbReference>
<dbReference type="RefSeq" id="WP_003447875.1">
    <property type="nucleotide sequence ID" value="NZ_LFYL01000003.1"/>
</dbReference>
<dbReference type="PDB" id="1MIO">
    <property type="method" value="X-ray"/>
    <property type="resolution" value="3.00 A"/>
    <property type="chains" value="B/D=1-458"/>
</dbReference>
<dbReference type="PDB" id="4WES">
    <property type="method" value="X-ray"/>
    <property type="resolution" value="1.08 A"/>
    <property type="chains" value="B/D=1-458"/>
</dbReference>
<dbReference type="PDB" id="4WN9">
    <property type="method" value="X-ray"/>
    <property type="resolution" value="1.90 A"/>
    <property type="chains" value="B/D=1-458"/>
</dbReference>
<dbReference type="PDB" id="5VPW">
    <property type="method" value="X-ray"/>
    <property type="resolution" value="1.85 A"/>
    <property type="chains" value="B/D=1-458"/>
</dbReference>
<dbReference type="PDB" id="5VQ3">
    <property type="method" value="X-ray"/>
    <property type="resolution" value="1.72 A"/>
    <property type="chains" value="B/D=1-458"/>
</dbReference>
<dbReference type="PDBsum" id="1MIO"/>
<dbReference type="PDBsum" id="4WES"/>
<dbReference type="PDBsum" id="4WN9"/>
<dbReference type="PDBsum" id="5VPW"/>
<dbReference type="PDBsum" id="5VQ3"/>
<dbReference type="SMR" id="P11347"/>
<dbReference type="GeneID" id="93073611"/>
<dbReference type="OrthoDB" id="9800746at2"/>
<dbReference type="BioCyc" id="MetaCyc:NIFKCP-MONOMER"/>
<dbReference type="BRENDA" id="1.18.6.1">
    <property type="organism ID" value="1502"/>
</dbReference>
<dbReference type="EvolutionaryTrace" id="P11347"/>
<dbReference type="GO" id="GO:0016612">
    <property type="term" value="C:molybdenum-iron nitrogenase complex"/>
    <property type="evidence" value="ECO:0007669"/>
    <property type="project" value="InterPro"/>
</dbReference>
<dbReference type="GO" id="GO:0005524">
    <property type="term" value="F:ATP binding"/>
    <property type="evidence" value="ECO:0007669"/>
    <property type="project" value="UniProtKB-KW"/>
</dbReference>
<dbReference type="GO" id="GO:0051536">
    <property type="term" value="F:iron-sulfur cluster binding"/>
    <property type="evidence" value="ECO:0007669"/>
    <property type="project" value="UniProtKB-KW"/>
</dbReference>
<dbReference type="GO" id="GO:0046872">
    <property type="term" value="F:metal ion binding"/>
    <property type="evidence" value="ECO:0007669"/>
    <property type="project" value="UniProtKB-KW"/>
</dbReference>
<dbReference type="GO" id="GO:0016163">
    <property type="term" value="F:nitrogenase activity"/>
    <property type="evidence" value="ECO:0007669"/>
    <property type="project" value="UniProtKB-EC"/>
</dbReference>
<dbReference type="GO" id="GO:0009399">
    <property type="term" value="P:nitrogen fixation"/>
    <property type="evidence" value="ECO:0007669"/>
    <property type="project" value="UniProtKB-KW"/>
</dbReference>
<dbReference type="CDD" id="cd01974">
    <property type="entry name" value="Nitrogenase_MoFe_beta"/>
    <property type="match status" value="1"/>
</dbReference>
<dbReference type="Gene3D" id="3.40.50.1980">
    <property type="entry name" value="Nitrogenase molybdenum iron protein domain"/>
    <property type="match status" value="3"/>
</dbReference>
<dbReference type="Gene3D" id="1.20.89.10">
    <property type="entry name" value="Nitrogenase Molybdenum-iron Protein, subunit B, domain 4"/>
    <property type="match status" value="1"/>
</dbReference>
<dbReference type="InterPro" id="IPR050152">
    <property type="entry name" value="ChlB/BchB/BchZ"/>
</dbReference>
<dbReference type="InterPro" id="IPR000510">
    <property type="entry name" value="Nase/OxRdtase_comp1"/>
</dbReference>
<dbReference type="InterPro" id="IPR000318">
    <property type="entry name" value="Nase_comp1_CS"/>
</dbReference>
<dbReference type="InterPro" id="IPR005976">
    <property type="entry name" value="Nase_Mo-Fe_CF_bsu"/>
</dbReference>
<dbReference type="NCBIfam" id="TIGR01286">
    <property type="entry name" value="nifK"/>
    <property type="match status" value="1"/>
</dbReference>
<dbReference type="PANTHER" id="PTHR33712">
    <property type="entry name" value="LIGHT-INDEPENDENT PROTOCHLOROPHYLLIDE REDUCTASE SUBUNIT B"/>
    <property type="match status" value="1"/>
</dbReference>
<dbReference type="PANTHER" id="PTHR33712:SF7">
    <property type="entry name" value="LIGHT-INDEPENDENT PROTOCHLOROPHYLLIDE REDUCTASE SUBUNIT B"/>
    <property type="match status" value="1"/>
</dbReference>
<dbReference type="Pfam" id="PF00148">
    <property type="entry name" value="Oxidored_nitro"/>
    <property type="match status" value="1"/>
</dbReference>
<dbReference type="SUPFAM" id="SSF53807">
    <property type="entry name" value="Helical backbone' metal receptor"/>
    <property type="match status" value="1"/>
</dbReference>
<dbReference type="PROSITE" id="PS00699">
    <property type="entry name" value="NITROGENASE_1_1"/>
    <property type="match status" value="1"/>
</dbReference>
<dbReference type="PROSITE" id="PS00090">
    <property type="entry name" value="NITROGENASE_1_2"/>
    <property type="match status" value="1"/>
</dbReference>
<evidence type="ECO:0000305" key="1"/>
<evidence type="ECO:0007829" key="2">
    <source>
        <dbReference type="PDB" id="4WES"/>
    </source>
</evidence>
<evidence type="ECO:0007829" key="3">
    <source>
        <dbReference type="PDB" id="5VQ3"/>
    </source>
</evidence>
<accession>P11347</accession>
<feature type="chain" id="PRO_0000153097" description="Nitrogenase molybdenum-iron protein beta chain">
    <location>
        <begin position="1"/>
        <end position="458"/>
    </location>
</feature>
<feature type="binding site">
    <location>
        <position position="23"/>
    </location>
    <ligand>
        <name>[8Fe-7S] cluster</name>
        <dbReference type="ChEBI" id="CHEBI:21143"/>
        <note>ligand shared with alpha chain</note>
    </ligand>
</feature>
<feature type="binding site">
    <location>
        <position position="48"/>
    </location>
    <ligand>
        <name>[8Fe-7S] cluster</name>
        <dbReference type="ChEBI" id="CHEBI:21143"/>
        <note>ligand shared with alpha chain</note>
    </ligand>
</feature>
<feature type="binding site">
    <location>
        <position position="106"/>
    </location>
    <ligand>
        <name>[8Fe-7S] cluster</name>
        <dbReference type="ChEBI" id="CHEBI:21143"/>
        <note>ligand shared with alpha chain</note>
    </ligand>
</feature>
<feature type="binding site">
    <location>
        <position position="141"/>
    </location>
    <ligand>
        <name>[8Fe-7S] cluster</name>
        <dbReference type="ChEBI" id="CHEBI:21143"/>
        <note>ligand shared with alpha chain</note>
    </ligand>
</feature>
<feature type="strand" evidence="2">
    <location>
        <begin position="16"/>
        <end position="20"/>
    </location>
</feature>
<feature type="helix" evidence="2">
    <location>
        <begin position="24"/>
        <end position="33"/>
    </location>
</feature>
<feature type="strand" evidence="2">
    <location>
        <begin position="38"/>
        <end position="44"/>
    </location>
</feature>
<feature type="helix" evidence="2">
    <location>
        <begin position="46"/>
        <end position="60"/>
    </location>
</feature>
<feature type="helix" evidence="2">
    <location>
        <begin position="73"/>
        <end position="78"/>
    </location>
</feature>
<feature type="helix" evidence="2">
    <location>
        <begin position="81"/>
        <end position="95"/>
    </location>
</feature>
<feature type="strand" evidence="2">
    <location>
        <begin position="98"/>
        <end position="104"/>
    </location>
</feature>
<feature type="helix" evidence="2">
    <location>
        <begin position="106"/>
        <end position="111"/>
    </location>
</feature>
<feature type="helix" evidence="2">
    <location>
        <begin position="115"/>
        <end position="125"/>
    </location>
</feature>
<feature type="strand" evidence="2">
    <location>
        <begin position="133"/>
        <end position="136"/>
    </location>
</feature>
<feature type="helix" evidence="2">
    <location>
        <begin position="146"/>
        <end position="161"/>
    </location>
</feature>
<feature type="strand" evidence="2">
    <location>
        <begin position="172"/>
        <end position="175"/>
    </location>
</feature>
<feature type="helix" evidence="2">
    <location>
        <begin position="181"/>
        <end position="193"/>
    </location>
</feature>
<feature type="strand" evidence="2">
    <location>
        <begin position="198"/>
        <end position="202"/>
    </location>
</feature>
<feature type="turn" evidence="2">
    <location>
        <begin position="205"/>
        <end position="207"/>
    </location>
</feature>
<feature type="helix" evidence="2">
    <location>
        <begin position="226"/>
        <end position="231"/>
    </location>
</feature>
<feature type="helix" evidence="2">
    <location>
        <begin position="232"/>
        <end position="234"/>
    </location>
</feature>
<feature type="strand" evidence="2">
    <location>
        <begin position="236"/>
        <end position="242"/>
    </location>
</feature>
<feature type="helix" evidence="2">
    <location>
        <begin position="243"/>
        <end position="257"/>
    </location>
</feature>
<feature type="strand" evidence="2">
    <location>
        <begin position="261"/>
        <end position="264"/>
    </location>
</feature>
<feature type="helix" evidence="2">
    <location>
        <begin position="270"/>
        <end position="284"/>
    </location>
</feature>
<feature type="helix" evidence="2">
    <location>
        <begin position="290"/>
        <end position="305"/>
    </location>
</feature>
<feature type="helix" evidence="2">
    <location>
        <begin position="307"/>
        <end position="309"/>
    </location>
</feature>
<feature type="turn" evidence="2">
    <location>
        <begin position="310"/>
        <end position="312"/>
    </location>
</feature>
<feature type="strand" evidence="2">
    <location>
        <begin position="314"/>
        <end position="319"/>
    </location>
</feature>
<feature type="helix" evidence="2">
    <location>
        <begin position="321"/>
        <end position="333"/>
    </location>
</feature>
<feature type="strand" evidence="2">
    <location>
        <begin position="337"/>
        <end position="345"/>
    </location>
</feature>
<feature type="helix" evidence="2">
    <location>
        <begin position="348"/>
        <end position="360"/>
    </location>
</feature>
<feature type="strand" evidence="2">
    <location>
        <begin position="367"/>
        <end position="370"/>
    </location>
</feature>
<feature type="helix" evidence="2">
    <location>
        <begin position="374"/>
        <end position="383"/>
    </location>
</feature>
<feature type="strand" evidence="2">
    <location>
        <begin position="387"/>
        <end position="392"/>
    </location>
</feature>
<feature type="helix" evidence="2">
    <location>
        <begin position="393"/>
        <end position="395"/>
    </location>
</feature>
<feature type="helix" evidence="2">
    <location>
        <begin position="396"/>
        <end position="402"/>
    </location>
</feature>
<feature type="strand" evidence="2">
    <location>
        <begin position="406"/>
        <end position="408"/>
    </location>
</feature>
<feature type="strand" evidence="3">
    <location>
        <begin position="415"/>
        <end position="418"/>
    </location>
</feature>
<feature type="helix" evidence="2">
    <location>
        <begin position="419"/>
        <end position="421"/>
    </location>
</feature>
<feature type="helix" evidence="2">
    <location>
        <begin position="426"/>
        <end position="448"/>
    </location>
</feature>
<feature type="helix" evidence="2">
    <location>
        <begin position="451"/>
        <end position="453"/>
    </location>
</feature>
<reference key="1">
    <citation type="journal article" date="1988" name="Biochemistry">
        <title>Distinct structural features of the alpha and beta subunits of nitrogenase molybdenum-iron protein of Clostridium pasteurianum: an analysis of amino acid sequences.</title>
        <authorList>
            <person name="Wang S.-Z."/>
            <person name="Chen J.-S."/>
            <person name="Johnson J.L."/>
        </authorList>
    </citation>
    <scope>NUCLEOTIDE SEQUENCE [GENOMIC DNA]</scope>
    <source>
        <strain>ATCC 6013 / DSM 525 / NCIB 9486 / VKM B-1774 / W5</strain>
    </source>
</reference>
<reference key="2">
    <citation type="journal article" date="1987" name="Nucleic Acids Res.">
        <title>Nucleotide and deduced amino acid sequences of nifD encoding the alpha-subunit of nitrogenase MoFe protein of Clostridium pasteurianum.</title>
        <authorList>
            <person name="Wang S.-Z."/>
            <person name="Chen J.-S."/>
            <person name="Johnson J.L."/>
        </authorList>
    </citation>
    <scope>NUCLEOTIDE SEQUENCE [GENOMIC DNA] OF 1-11</scope>
</reference>
<reference key="3">
    <citation type="journal article" date="1993" name="Biochemistry">
        <title>X-ray crystal structure of the nitrogenase molybdenum-iron protein from Clostridium pasteurianum at 3.0-A resolution.</title>
        <authorList>
            <person name="Kim J."/>
            <person name="Woo D."/>
            <person name="Rees D.C."/>
        </authorList>
    </citation>
    <scope>X-RAY CRYSTALLOGRAPHY (3.0 ANGSTROMS)</scope>
</reference>
<keyword id="KW-0002">3D-structure</keyword>
<keyword id="KW-0067">ATP-binding</keyword>
<keyword id="KW-0408">Iron</keyword>
<keyword id="KW-0411">Iron-sulfur</keyword>
<keyword id="KW-0479">Metal-binding</keyword>
<keyword id="KW-0535">Nitrogen fixation</keyword>
<keyword id="KW-0547">Nucleotide-binding</keyword>
<keyword id="KW-0560">Oxidoreductase</keyword>